<reference key="1">
    <citation type="journal article" date="2006" name="Proc. Natl. Acad. Sci. U.S.A.">
        <title>Evolution of sensory complexity recorded in a myxobacterial genome.</title>
        <authorList>
            <person name="Goldman B.S."/>
            <person name="Nierman W.C."/>
            <person name="Kaiser D."/>
            <person name="Slater S.C."/>
            <person name="Durkin A.S."/>
            <person name="Eisen J.A."/>
            <person name="Ronning C.M."/>
            <person name="Barbazuk W.B."/>
            <person name="Blanchard M."/>
            <person name="Field C."/>
            <person name="Halling C."/>
            <person name="Hinkle G."/>
            <person name="Iartchuk O."/>
            <person name="Kim H.S."/>
            <person name="Mackenzie C."/>
            <person name="Madupu R."/>
            <person name="Miller N."/>
            <person name="Shvartsbeyn A."/>
            <person name="Sullivan S.A."/>
            <person name="Vaudin M."/>
            <person name="Wiegand R."/>
            <person name="Kaplan H.B."/>
        </authorList>
    </citation>
    <scope>NUCLEOTIDE SEQUENCE [LARGE SCALE GENOMIC DNA]</scope>
    <source>
        <strain>DK1622</strain>
    </source>
</reference>
<keyword id="KW-0067">ATP-binding</keyword>
<keyword id="KW-0963">Cytoplasm</keyword>
<keyword id="KW-0436">Ligase</keyword>
<keyword id="KW-0547">Nucleotide-binding</keyword>
<keyword id="KW-0658">Purine biosynthesis</keyword>
<keyword id="KW-1185">Reference proteome</keyword>
<organism>
    <name type="scientific">Myxococcus xanthus (strain DK1622)</name>
    <dbReference type="NCBI Taxonomy" id="246197"/>
    <lineage>
        <taxon>Bacteria</taxon>
        <taxon>Pseudomonadati</taxon>
        <taxon>Myxococcota</taxon>
        <taxon>Myxococcia</taxon>
        <taxon>Myxococcales</taxon>
        <taxon>Cystobacterineae</taxon>
        <taxon>Myxococcaceae</taxon>
        <taxon>Myxococcus</taxon>
    </lineage>
</organism>
<comment type="catalytic activity">
    <reaction evidence="1">
        <text>2-formamido-N(1)-(5-O-phospho-beta-D-ribosyl)acetamidine + ATP = 5-amino-1-(5-phospho-beta-D-ribosyl)imidazole + ADP + phosphate + H(+)</text>
        <dbReference type="Rhea" id="RHEA:23032"/>
        <dbReference type="ChEBI" id="CHEBI:15378"/>
        <dbReference type="ChEBI" id="CHEBI:30616"/>
        <dbReference type="ChEBI" id="CHEBI:43474"/>
        <dbReference type="ChEBI" id="CHEBI:137981"/>
        <dbReference type="ChEBI" id="CHEBI:147287"/>
        <dbReference type="ChEBI" id="CHEBI:456216"/>
        <dbReference type="EC" id="6.3.3.1"/>
    </reaction>
</comment>
<comment type="pathway">
    <text evidence="1">Purine metabolism; IMP biosynthesis via de novo pathway; 5-amino-1-(5-phospho-D-ribosyl)imidazole from N(2)-formyl-N(1)-(5-phospho-D-ribosyl)glycinamide: step 2/2.</text>
</comment>
<comment type="subcellular location">
    <subcellularLocation>
        <location evidence="1">Cytoplasm</location>
    </subcellularLocation>
</comment>
<comment type="similarity">
    <text evidence="1">Belongs to the AIR synthase family.</text>
</comment>
<name>PUR5_MYXXD</name>
<sequence>MGTTYKQSGVDIEAGDAFVERIKPHAARTMRPEVMGGVGGFGGLFALPPGKYQQPVLVAGTDGVGTKLKVAFAAGRHGTVGIDLVAMSVNDILTCGAEPLFFLDYFATGRLEVDDAAEVVKGIALGCEQAGCALLGGETAEMPGFYARGEYDLAGFCVGVVERAAIIDGKSVKPGDALIGLPSSGLHSNGYSLARKVLLDDGKLALDATPEGLDRPLVDALLEPTRIYVKDVLALLQAVKVKGLAHITGSGIPGNLPRCLPDGTRAVLSEQTWPKPPIFDLIAKLGSVARDEMFNTFNMGLGLILVVAKEDVAQALSVLSGRGVQAFEVGRVEAGQGEATAVIDP</sequence>
<evidence type="ECO:0000255" key="1">
    <source>
        <dbReference type="HAMAP-Rule" id="MF_00741"/>
    </source>
</evidence>
<protein>
    <recommendedName>
        <fullName evidence="1">Phosphoribosylformylglycinamidine cyclo-ligase</fullName>
        <ecNumber evidence="1">6.3.3.1</ecNumber>
    </recommendedName>
    <alternativeName>
        <fullName evidence="1">AIR synthase</fullName>
    </alternativeName>
    <alternativeName>
        <fullName evidence="1">AIRS</fullName>
    </alternativeName>
    <alternativeName>
        <fullName evidence="1">Phosphoribosyl-aminoimidazole synthetase</fullName>
    </alternativeName>
</protein>
<gene>
    <name evidence="1" type="primary">purM</name>
    <name type="ordered locus">MXAN_2701</name>
</gene>
<accession>Q1D8V5</accession>
<dbReference type="EC" id="6.3.3.1" evidence="1"/>
<dbReference type="EMBL" id="CP000113">
    <property type="protein sequence ID" value="ABF92152.1"/>
    <property type="molecule type" value="Genomic_DNA"/>
</dbReference>
<dbReference type="RefSeq" id="WP_011552769.1">
    <property type="nucleotide sequence ID" value="NC_008095.1"/>
</dbReference>
<dbReference type="SMR" id="Q1D8V5"/>
<dbReference type="STRING" id="246197.MXAN_2701"/>
<dbReference type="EnsemblBacteria" id="ABF92152">
    <property type="protein sequence ID" value="ABF92152"/>
    <property type="gene ID" value="MXAN_2701"/>
</dbReference>
<dbReference type="GeneID" id="41360079"/>
<dbReference type="KEGG" id="mxa:MXAN_2701"/>
<dbReference type="eggNOG" id="COG0150">
    <property type="taxonomic scope" value="Bacteria"/>
</dbReference>
<dbReference type="HOGENOM" id="CLU_047116_0_0_7"/>
<dbReference type="OrthoDB" id="9777881at2"/>
<dbReference type="UniPathway" id="UPA00074">
    <property type="reaction ID" value="UER00129"/>
</dbReference>
<dbReference type="Proteomes" id="UP000002402">
    <property type="component" value="Chromosome"/>
</dbReference>
<dbReference type="GO" id="GO:0005829">
    <property type="term" value="C:cytosol"/>
    <property type="evidence" value="ECO:0007669"/>
    <property type="project" value="TreeGrafter"/>
</dbReference>
<dbReference type="GO" id="GO:0005524">
    <property type="term" value="F:ATP binding"/>
    <property type="evidence" value="ECO:0007669"/>
    <property type="project" value="UniProtKB-KW"/>
</dbReference>
<dbReference type="GO" id="GO:0004637">
    <property type="term" value="F:phosphoribosylamine-glycine ligase activity"/>
    <property type="evidence" value="ECO:0007669"/>
    <property type="project" value="TreeGrafter"/>
</dbReference>
<dbReference type="GO" id="GO:0004641">
    <property type="term" value="F:phosphoribosylformylglycinamidine cyclo-ligase activity"/>
    <property type="evidence" value="ECO:0007669"/>
    <property type="project" value="UniProtKB-UniRule"/>
</dbReference>
<dbReference type="GO" id="GO:0006189">
    <property type="term" value="P:'de novo' IMP biosynthetic process"/>
    <property type="evidence" value="ECO:0007669"/>
    <property type="project" value="UniProtKB-UniRule"/>
</dbReference>
<dbReference type="GO" id="GO:0046084">
    <property type="term" value="P:adenine biosynthetic process"/>
    <property type="evidence" value="ECO:0007669"/>
    <property type="project" value="TreeGrafter"/>
</dbReference>
<dbReference type="CDD" id="cd02196">
    <property type="entry name" value="PurM"/>
    <property type="match status" value="1"/>
</dbReference>
<dbReference type="FunFam" id="3.30.1330.10:FF:000001">
    <property type="entry name" value="Phosphoribosylformylglycinamidine cyclo-ligase"/>
    <property type="match status" value="1"/>
</dbReference>
<dbReference type="FunFam" id="3.90.650.10:FF:000011">
    <property type="entry name" value="Phosphoribosylformylglycinamidine cyclo-ligase"/>
    <property type="match status" value="1"/>
</dbReference>
<dbReference type="Gene3D" id="3.90.650.10">
    <property type="entry name" value="PurM-like C-terminal domain"/>
    <property type="match status" value="1"/>
</dbReference>
<dbReference type="Gene3D" id="3.30.1330.10">
    <property type="entry name" value="PurM-like, N-terminal domain"/>
    <property type="match status" value="1"/>
</dbReference>
<dbReference type="HAMAP" id="MF_00741">
    <property type="entry name" value="AIRS"/>
    <property type="match status" value="1"/>
</dbReference>
<dbReference type="InterPro" id="IPR010918">
    <property type="entry name" value="PurM-like_C_dom"/>
</dbReference>
<dbReference type="InterPro" id="IPR036676">
    <property type="entry name" value="PurM-like_C_sf"/>
</dbReference>
<dbReference type="InterPro" id="IPR016188">
    <property type="entry name" value="PurM-like_N"/>
</dbReference>
<dbReference type="InterPro" id="IPR036921">
    <property type="entry name" value="PurM-like_N_sf"/>
</dbReference>
<dbReference type="InterPro" id="IPR004733">
    <property type="entry name" value="PurM_cligase"/>
</dbReference>
<dbReference type="NCBIfam" id="TIGR00878">
    <property type="entry name" value="purM"/>
    <property type="match status" value="1"/>
</dbReference>
<dbReference type="PANTHER" id="PTHR10520:SF12">
    <property type="entry name" value="TRIFUNCTIONAL PURINE BIOSYNTHETIC PROTEIN ADENOSINE-3"/>
    <property type="match status" value="1"/>
</dbReference>
<dbReference type="PANTHER" id="PTHR10520">
    <property type="entry name" value="TRIFUNCTIONAL PURINE BIOSYNTHETIC PROTEIN ADENOSINE-3-RELATED"/>
    <property type="match status" value="1"/>
</dbReference>
<dbReference type="Pfam" id="PF00586">
    <property type="entry name" value="AIRS"/>
    <property type="match status" value="1"/>
</dbReference>
<dbReference type="Pfam" id="PF02769">
    <property type="entry name" value="AIRS_C"/>
    <property type="match status" value="1"/>
</dbReference>
<dbReference type="SUPFAM" id="SSF56042">
    <property type="entry name" value="PurM C-terminal domain-like"/>
    <property type="match status" value="1"/>
</dbReference>
<dbReference type="SUPFAM" id="SSF55326">
    <property type="entry name" value="PurM N-terminal domain-like"/>
    <property type="match status" value="1"/>
</dbReference>
<proteinExistence type="inferred from homology"/>
<feature type="chain" id="PRO_0000258372" description="Phosphoribosylformylglycinamidine cyclo-ligase">
    <location>
        <begin position="1"/>
        <end position="345"/>
    </location>
</feature>